<proteinExistence type="inferred from homology"/>
<name>PCP_LACAC</name>
<accession>Q5FMJ2</accession>
<sequence length="200" mass="21805">MKILITGFDPFGGEKINPAIEAVKKLPDEIDGHQIIKLEVPTIFYESARVVKNAIEKYQPDMVINVGQAGGRAAITPERIAINFQSGSTPDNSGKGPKEGKIEADGADGYFTQLPIKKMVTATRKAGVPSEISNSAGNYVCNHLFYELQYMRVHEFPNLKTGFIHIPFLPSQVKNGRHPSMSLSYMVKGLTASIKAAVDA</sequence>
<protein>
    <recommendedName>
        <fullName evidence="1">Pyrrolidone-carboxylate peptidase</fullName>
        <ecNumber evidence="1">3.4.19.3</ecNumber>
    </recommendedName>
    <alternativeName>
        <fullName evidence="1">5-oxoprolyl-peptidase</fullName>
    </alternativeName>
    <alternativeName>
        <fullName evidence="1">Pyroglutamyl-peptidase I</fullName>
        <shortName evidence="1">PGP-I</shortName>
        <shortName evidence="1">Pyrase</shortName>
    </alternativeName>
</protein>
<keyword id="KW-0963">Cytoplasm</keyword>
<keyword id="KW-0378">Hydrolase</keyword>
<keyword id="KW-0645">Protease</keyword>
<keyword id="KW-1185">Reference proteome</keyword>
<keyword id="KW-0788">Thiol protease</keyword>
<feature type="chain" id="PRO_1000050129" description="Pyrrolidone-carboxylate peptidase">
    <location>
        <begin position="1"/>
        <end position="200"/>
    </location>
</feature>
<feature type="active site" evidence="1">
    <location>
        <position position="78"/>
    </location>
</feature>
<feature type="active site" evidence="1">
    <location>
        <position position="141"/>
    </location>
</feature>
<feature type="active site" evidence="1">
    <location>
        <position position="165"/>
    </location>
</feature>
<dbReference type="EC" id="3.4.19.3" evidence="1"/>
<dbReference type="EMBL" id="CP000033">
    <property type="protein sequence ID" value="AAV42082.1"/>
    <property type="molecule type" value="Genomic_DNA"/>
</dbReference>
<dbReference type="RefSeq" id="WP_003548812.1">
    <property type="nucleotide sequence ID" value="NC_006814.3"/>
</dbReference>
<dbReference type="RefSeq" id="YP_193113.1">
    <property type="nucleotide sequence ID" value="NC_006814.3"/>
</dbReference>
<dbReference type="SMR" id="Q5FMJ2"/>
<dbReference type="STRING" id="272621.LBA0186"/>
<dbReference type="MEROPS" id="C15.001"/>
<dbReference type="GeneID" id="93290710"/>
<dbReference type="KEGG" id="lac:LBA0186"/>
<dbReference type="PATRIC" id="fig|272621.13.peg.177"/>
<dbReference type="eggNOG" id="COG2039">
    <property type="taxonomic scope" value="Bacteria"/>
</dbReference>
<dbReference type="HOGENOM" id="CLU_043960_4_0_9"/>
<dbReference type="OrthoDB" id="9779738at2"/>
<dbReference type="BioCyc" id="LACI272621:G1G49-179-MONOMER"/>
<dbReference type="Proteomes" id="UP000006381">
    <property type="component" value="Chromosome"/>
</dbReference>
<dbReference type="GO" id="GO:0005829">
    <property type="term" value="C:cytosol"/>
    <property type="evidence" value="ECO:0007669"/>
    <property type="project" value="InterPro"/>
</dbReference>
<dbReference type="GO" id="GO:0016920">
    <property type="term" value="F:pyroglutamyl-peptidase activity"/>
    <property type="evidence" value="ECO:0007669"/>
    <property type="project" value="UniProtKB-UniRule"/>
</dbReference>
<dbReference type="GO" id="GO:0006508">
    <property type="term" value="P:proteolysis"/>
    <property type="evidence" value="ECO:0007669"/>
    <property type="project" value="UniProtKB-KW"/>
</dbReference>
<dbReference type="CDD" id="cd00501">
    <property type="entry name" value="Peptidase_C15"/>
    <property type="match status" value="1"/>
</dbReference>
<dbReference type="FunFam" id="3.40.630.20:FF:000001">
    <property type="entry name" value="Pyrrolidone-carboxylate peptidase"/>
    <property type="match status" value="1"/>
</dbReference>
<dbReference type="Gene3D" id="3.40.630.20">
    <property type="entry name" value="Peptidase C15, pyroglutamyl peptidase I-like"/>
    <property type="match status" value="1"/>
</dbReference>
<dbReference type="HAMAP" id="MF_00417">
    <property type="entry name" value="Pyrrolid_peptidase"/>
    <property type="match status" value="1"/>
</dbReference>
<dbReference type="InterPro" id="IPR000816">
    <property type="entry name" value="Peptidase_C15"/>
</dbReference>
<dbReference type="InterPro" id="IPR016125">
    <property type="entry name" value="Peptidase_C15-like"/>
</dbReference>
<dbReference type="InterPro" id="IPR036440">
    <property type="entry name" value="Peptidase_C15-like_sf"/>
</dbReference>
<dbReference type="InterPro" id="IPR029762">
    <property type="entry name" value="PGP-I_bact-type"/>
</dbReference>
<dbReference type="InterPro" id="IPR033694">
    <property type="entry name" value="PGPEP1_Cys_AS"/>
</dbReference>
<dbReference type="InterPro" id="IPR033693">
    <property type="entry name" value="PGPEP1_Glu_AS"/>
</dbReference>
<dbReference type="NCBIfam" id="NF009676">
    <property type="entry name" value="PRK13197.1"/>
    <property type="match status" value="1"/>
</dbReference>
<dbReference type="NCBIfam" id="TIGR00504">
    <property type="entry name" value="pyro_pdase"/>
    <property type="match status" value="1"/>
</dbReference>
<dbReference type="PANTHER" id="PTHR23402">
    <property type="entry name" value="PROTEASE FAMILY C15 PYROGLUTAMYL-PEPTIDASE I-RELATED"/>
    <property type="match status" value="1"/>
</dbReference>
<dbReference type="PANTHER" id="PTHR23402:SF1">
    <property type="entry name" value="PYROGLUTAMYL-PEPTIDASE I"/>
    <property type="match status" value="1"/>
</dbReference>
<dbReference type="Pfam" id="PF01470">
    <property type="entry name" value="Peptidase_C15"/>
    <property type="match status" value="1"/>
</dbReference>
<dbReference type="PIRSF" id="PIRSF015592">
    <property type="entry name" value="Prld-crbxl_pptds"/>
    <property type="match status" value="1"/>
</dbReference>
<dbReference type="PRINTS" id="PR00706">
    <property type="entry name" value="PYROGLUPTASE"/>
</dbReference>
<dbReference type="SUPFAM" id="SSF53182">
    <property type="entry name" value="Pyrrolidone carboxyl peptidase (pyroglutamate aminopeptidase)"/>
    <property type="match status" value="1"/>
</dbReference>
<dbReference type="PROSITE" id="PS01334">
    <property type="entry name" value="PYRASE_CYS"/>
    <property type="match status" value="1"/>
</dbReference>
<dbReference type="PROSITE" id="PS01333">
    <property type="entry name" value="PYRASE_GLU"/>
    <property type="match status" value="1"/>
</dbReference>
<evidence type="ECO:0000255" key="1">
    <source>
        <dbReference type="HAMAP-Rule" id="MF_00417"/>
    </source>
</evidence>
<gene>
    <name evidence="1" type="primary">pcp</name>
    <name type="ordered locus">LBA0186</name>
</gene>
<reference key="1">
    <citation type="journal article" date="2005" name="Proc. Natl. Acad. Sci. U.S.A.">
        <title>Complete genome sequence of the probiotic lactic acid bacterium Lactobacillus acidophilus NCFM.</title>
        <authorList>
            <person name="Altermann E."/>
            <person name="Russell W.M."/>
            <person name="Azcarate-Peril M.A."/>
            <person name="Barrangou R."/>
            <person name="Buck B.L."/>
            <person name="McAuliffe O."/>
            <person name="Souther N."/>
            <person name="Dobson A."/>
            <person name="Duong T."/>
            <person name="Callanan M."/>
            <person name="Lick S."/>
            <person name="Hamrick A."/>
            <person name="Cano R."/>
            <person name="Klaenhammer T.R."/>
        </authorList>
    </citation>
    <scope>NUCLEOTIDE SEQUENCE [LARGE SCALE GENOMIC DNA]</scope>
    <source>
        <strain>ATCC 700396 / NCK56 / N2 / NCFM</strain>
    </source>
</reference>
<comment type="function">
    <text evidence="1">Removes 5-oxoproline from various penultimate amino acid residues except L-proline.</text>
</comment>
<comment type="catalytic activity">
    <reaction evidence="1">
        <text>Release of an N-terminal pyroglutamyl group from a polypeptide, the second amino acid generally not being Pro.</text>
        <dbReference type="EC" id="3.4.19.3"/>
    </reaction>
</comment>
<comment type="subunit">
    <text evidence="1">Homotetramer.</text>
</comment>
<comment type="subcellular location">
    <subcellularLocation>
        <location evidence="1">Cytoplasm</location>
    </subcellularLocation>
</comment>
<comment type="similarity">
    <text evidence="1">Belongs to the peptidase C15 family.</text>
</comment>
<organism>
    <name type="scientific">Lactobacillus acidophilus (strain ATCC 700396 / NCK56 / N2 / NCFM)</name>
    <dbReference type="NCBI Taxonomy" id="272621"/>
    <lineage>
        <taxon>Bacteria</taxon>
        <taxon>Bacillati</taxon>
        <taxon>Bacillota</taxon>
        <taxon>Bacilli</taxon>
        <taxon>Lactobacillales</taxon>
        <taxon>Lactobacillaceae</taxon>
        <taxon>Lactobacillus</taxon>
    </lineage>
</organism>